<dbReference type="EC" id="3.5.2.3" evidence="1"/>
<dbReference type="EMBL" id="CU928162">
    <property type="protein sequence ID" value="CAR07407.1"/>
    <property type="molecule type" value="Genomic_DNA"/>
</dbReference>
<dbReference type="RefSeq" id="WP_000126543.1">
    <property type="nucleotide sequence ID" value="NC_011745.1"/>
</dbReference>
<dbReference type="SMR" id="B7MTJ3"/>
<dbReference type="MEROPS" id="M38.A02"/>
<dbReference type="KEGG" id="ecq:ECED1_1206"/>
<dbReference type="HOGENOM" id="CLU_041558_1_0_6"/>
<dbReference type="UniPathway" id="UPA00070">
    <property type="reaction ID" value="UER00117"/>
</dbReference>
<dbReference type="Proteomes" id="UP000000748">
    <property type="component" value="Chromosome"/>
</dbReference>
<dbReference type="GO" id="GO:0005829">
    <property type="term" value="C:cytosol"/>
    <property type="evidence" value="ECO:0007669"/>
    <property type="project" value="TreeGrafter"/>
</dbReference>
<dbReference type="GO" id="GO:0004151">
    <property type="term" value="F:dihydroorotase activity"/>
    <property type="evidence" value="ECO:0007669"/>
    <property type="project" value="UniProtKB-UniRule"/>
</dbReference>
<dbReference type="GO" id="GO:0008270">
    <property type="term" value="F:zinc ion binding"/>
    <property type="evidence" value="ECO:0007669"/>
    <property type="project" value="UniProtKB-UniRule"/>
</dbReference>
<dbReference type="GO" id="GO:0006207">
    <property type="term" value="P:'de novo' pyrimidine nucleobase biosynthetic process"/>
    <property type="evidence" value="ECO:0007669"/>
    <property type="project" value="TreeGrafter"/>
</dbReference>
<dbReference type="GO" id="GO:0044205">
    <property type="term" value="P:'de novo' UMP biosynthetic process"/>
    <property type="evidence" value="ECO:0007669"/>
    <property type="project" value="UniProtKB-UniRule"/>
</dbReference>
<dbReference type="CDD" id="cd01294">
    <property type="entry name" value="DHOase"/>
    <property type="match status" value="1"/>
</dbReference>
<dbReference type="FunFam" id="3.20.20.140:FF:000006">
    <property type="entry name" value="Dihydroorotase"/>
    <property type="match status" value="1"/>
</dbReference>
<dbReference type="Gene3D" id="3.20.20.140">
    <property type="entry name" value="Metal-dependent hydrolases"/>
    <property type="match status" value="1"/>
</dbReference>
<dbReference type="HAMAP" id="MF_00219">
    <property type="entry name" value="PyrC_classII"/>
    <property type="match status" value="1"/>
</dbReference>
<dbReference type="InterPro" id="IPR006680">
    <property type="entry name" value="Amidohydro-rel"/>
</dbReference>
<dbReference type="InterPro" id="IPR004721">
    <property type="entry name" value="DHOdimr"/>
</dbReference>
<dbReference type="InterPro" id="IPR002195">
    <property type="entry name" value="Dihydroorotase_CS"/>
</dbReference>
<dbReference type="InterPro" id="IPR032466">
    <property type="entry name" value="Metal_Hydrolase"/>
</dbReference>
<dbReference type="NCBIfam" id="TIGR00856">
    <property type="entry name" value="pyrC_dimer"/>
    <property type="match status" value="1"/>
</dbReference>
<dbReference type="PANTHER" id="PTHR43137">
    <property type="entry name" value="DIHYDROOROTASE"/>
    <property type="match status" value="1"/>
</dbReference>
<dbReference type="PANTHER" id="PTHR43137:SF1">
    <property type="entry name" value="DIHYDROOROTASE"/>
    <property type="match status" value="1"/>
</dbReference>
<dbReference type="Pfam" id="PF01979">
    <property type="entry name" value="Amidohydro_1"/>
    <property type="match status" value="1"/>
</dbReference>
<dbReference type="PIRSF" id="PIRSF001237">
    <property type="entry name" value="DHOdimr"/>
    <property type="match status" value="1"/>
</dbReference>
<dbReference type="SUPFAM" id="SSF51556">
    <property type="entry name" value="Metallo-dependent hydrolases"/>
    <property type="match status" value="1"/>
</dbReference>
<dbReference type="PROSITE" id="PS00482">
    <property type="entry name" value="DIHYDROOROTASE_1"/>
    <property type="match status" value="1"/>
</dbReference>
<dbReference type="PROSITE" id="PS00483">
    <property type="entry name" value="DIHYDROOROTASE_2"/>
    <property type="match status" value="1"/>
</dbReference>
<reference key="1">
    <citation type="journal article" date="2009" name="PLoS Genet.">
        <title>Organised genome dynamics in the Escherichia coli species results in highly diverse adaptive paths.</title>
        <authorList>
            <person name="Touchon M."/>
            <person name="Hoede C."/>
            <person name="Tenaillon O."/>
            <person name="Barbe V."/>
            <person name="Baeriswyl S."/>
            <person name="Bidet P."/>
            <person name="Bingen E."/>
            <person name="Bonacorsi S."/>
            <person name="Bouchier C."/>
            <person name="Bouvet O."/>
            <person name="Calteau A."/>
            <person name="Chiapello H."/>
            <person name="Clermont O."/>
            <person name="Cruveiller S."/>
            <person name="Danchin A."/>
            <person name="Diard M."/>
            <person name="Dossat C."/>
            <person name="Karoui M.E."/>
            <person name="Frapy E."/>
            <person name="Garry L."/>
            <person name="Ghigo J.M."/>
            <person name="Gilles A.M."/>
            <person name="Johnson J."/>
            <person name="Le Bouguenec C."/>
            <person name="Lescat M."/>
            <person name="Mangenot S."/>
            <person name="Martinez-Jehanne V."/>
            <person name="Matic I."/>
            <person name="Nassif X."/>
            <person name="Oztas S."/>
            <person name="Petit M.A."/>
            <person name="Pichon C."/>
            <person name="Rouy Z."/>
            <person name="Ruf C.S."/>
            <person name="Schneider D."/>
            <person name="Tourret J."/>
            <person name="Vacherie B."/>
            <person name="Vallenet D."/>
            <person name="Medigue C."/>
            <person name="Rocha E.P.C."/>
            <person name="Denamur E."/>
        </authorList>
    </citation>
    <scope>NUCLEOTIDE SEQUENCE [LARGE SCALE GENOMIC DNA]</scope>
    <source>
        <strain>ED1a</strain>
    </source>
</reference>
<proteinExistence type="inferred from homology"/>
<gene>
    <name evidence="1" type="primary">pyrC</name>
    <name type="ordered locus">ECED1_1206</name>
</gene>
<sequence length="348" mass="38813">MTAPSQVLKIRRPDDWHLHLRDGDMLKTVVPYTSEIYGRAIVMPNLAPPVTTVEAAVAYRQRILDAVPAGHDFTPLMTCYLTDSLDPNELERGFNEGVFTAAKLYPANATTNSSHGVTSVDAIMPVLERMEKIGMPLLVHGEVTHADIDIFDREARFIESVMEPLRQRLTALKVVFEHITTKDAADYVRDGNERLAATITPQHLMFNRNHMLVGGVRPHLYCLPILKRNIHQQALRELVASGFNRVFLGTDSAPHARHRKESSCGCAGCFNAPTALGSYATVFEEMNALQHFEAFCSVNGPQFYGLPVNDTFIELVREEQQVAESIALTDDTLVPFLAGETVRWSVKQ</sequence>
<feature type="chain" id="PRO_1000193076" description="Dihydroorotase">
    <location>
        <begin position="1"/>
        <end position="348"/>
    </location>
</feature>
<feature type="active site" evidence="1">
    <location>
        <position position="251"/>
    </location>
</feature>
<feature type="binding site" evidence="1">
    <location>
        <position position="17"/>
    </location>
    <ligand>
        <name>Zn(2+)</name>
        <dbReference type="ChEBI" id="CHEBI:29105"/>
        <label>1</label>
    </ligand>
</feature>
<feature type="binding site" evidence="1">
    <location>
        <begin position="19"/>
        <end position="21"/>
    </location>
    <ligand>
        <name>substrate</name>
    </ligand>
</feature>
<feature type="binding site" evidence="1">
    <location>
        <position position="19"/>
    </location>
    <ligand>
        <name>Zn(2+)</name>
        <dbReference type="ChEBI" id="CHEBI:29105"/>
        <label>1</label>
    </ligand>
</feature>
<feature type="binding site" evidence="1">
    <location>
        <position position="45"/>
    </location>
    <ligand>
        <name>substrate</name>
    </ligand>
</feature>
<feature type="binding site" description="via carbamate group" evidence="1">
    <location>
        <position position="103"/>
    </location>
    <ligand>
        <name>Zn(2+)</name>
        <dbReference type="ChEBI" id="CHEBI:29105"/>
        <label>1</label>
    </ligand>
</feature>
<feature type="binding site" description="via carbamate group" evidence="1">
    <location>
        <position position="103"/>
    </location>
    <ligand>
        <name>Zn(2+)</name>
        <dbReference type="ChEBI" id="CHEBI:29105"/>
        <label>2</label>
    </ligand>
</feature>
<feature type="binding site" evidence="1">
    <location>
        <position position="140"/>
    </location>
    <ligand>
        <name>substrate</name>
    </ligand>
</feature>
<feature type="binding site" evidence="1">
    <location>
        <position position="140"/>
    </location>
    <ligand>
        <name>Zn(2+)</name>
        <dbReference type="ChEBI" id="CHEBI:29105"/>
        <label>2</label>
    </ligand>
</feature>
<feature type="binding site" evidence="1">
    <location>
        <position position="178"/>
    </location>
    <ligand>
        <name>Zn(2+)</name>
        <dbReference type="ChEBI" id="CHEBI:29105"/>
        <label>2</label>
    </ligand>
</feature>
<feature type="binding site" evidence="1">
    <location>
        <position position="223"/>
    </location>
    <ligand>
        <name>substrate</name>
    </ligand>
</feature>
<feature type="binding site" evidence="1">
    <location>
        <position position="251"/>
    </location>
    <ligand>
        <name>Zn(2+)</name>
        <dbReference type="ChEBI" id="CHEBI:29105"/>
        <label>1</label>
    </ligand>
</feature>
<feature type="binding site" evidence="1">
    <location>
        <position position="255"/>
    </location>
    <ligand>
        <name>substrate</name>
    </ligand>
</feature>
<feature type="binding site" evidence="1">
    <location>
        <position position="267"/>
    </location>
    <ligand>
        <name>substrate</name>
    </ligand>
</feature>
<feature type="modified residue" description="N6-carboxylysine" evidence="1">
    <location>
        <position position="103"/>
    </location>
</feature>
<evidence type="ECO:0000255" key="1">
    <source>
        <dbReference type="HAMAP-Rule" id="MF_00219"/>
    </source>
</evidence>
<name>PYRC_ECO81</name>
<accession>B7MTJ3</accession>
<organism>
    <name type="scientific">Escherichia coli O81 (strain ED1a)</name>
    <dbReference type="NCBI Taxonomy" id="585397"/>
    <lineage>
        <taxon>Bacteria</taxon>
        <taxon>Pseudomonadati</taxon>
        <taxon>Pseudomonadota</taxon>
        <taxon>Gammaproteobacteria</taxon>
        <taxon>Enterobacterales</taxon>
        <taxon>Enterobacteriaceae</taxon>
        <taxon>Escherichia</taxon>
    </lineage>
</organism>
<keyword id="KW-0378">Hydrolase</keyword>
<keyword id="KW-0479">Metal-binding</keyword>
<keyword id="KW-0665">Pyrimidine biosynthesis</keyword>
<keyword id="KW-0862">Zinc</keyword>
<protein>
    <recommendedName>
        <fullName evidence="1">Dihydroorotase</fullName>
        <shortName evidence="1">DHOase</shortName>
        <ecNumber evidence="1">3.5.2.3</ecNumber>
    </recommendedName>
</protein>
<comment type="function">
    <text evidence="1">Catalyzes the reversible cyclization of carbamoyl aspartate to dihydroorotate.</text>
</comment>
<comment type="catalytic activity">
    <reaction evidence="1">
        <text>(S)-dihydroorotate + H2O = N-carbamoyl-L-aspartate + H(+)</text>
        <dbReference type="Rhea" id="RHEA:24296"/>
        <dbReference type="ChEBI" id="CHEBI:15377"/>
        <dbReference type="ChEBI" id="CHEBI:15378"/>
        <dbReference type="ChEBI" id="CHEBI:30864"/>
        <dbReference type="ChEBI" id="CHEBI:32814"/>
        <dbReference type="EC" id="3.5.2.3"/>
    </reaction>
</comment>
<comment type="cofactor">
    <cofactor evidence="1">
        <name>Zn(2+)</name>
        <dbReference type="ChEBI" id="CHEBI:29105"/>
    </cofactor>
    <text evidence="1">Binds 2 Zn(2+) ions per subunit.</text>
</comment>
<comment type="pathway">
    <text evidence="1">Pyrimidine metabolism; UMP biosynthesis via de novo pathway; (S)-dihydroorotate from bicarbonate: step 3/3.</text>
</comment>
<comment type="subunit">
    <text evidence="1">Homodimer.</text>
</comment>
<comment type="similarity">
    <text evidence="1">Belongs to the metallo-dependent hydrolases superfamily. DHOase family. Class II DHOase subfamily.</text>
</comment>